<evidence type="ECO:0000255" key="1">
    <source>
        <dbReference type="HAMAP-Rule" id="MF_00083"/>
    </source>
</evidence>
<name>PTH_VIBCM</name>
<feature type="chain" id="PRO_1000118417" description="Peptidyl-tRNA hydrolase">
    <location>
        <begin position="1"/>
        <end position="196"/>
    </location>
</feature>
<feature type="active site" description="Proton acceptor" evidence="1">
    <location>
        <position position="23"/>
    </location>
</feature>
<feature type="binding site" evidence="1">
    <location>
        <position position="18"/>
    </location>
    <ligand>
        <name>tRNA</name>
        <dbReference type="ChEBI" id="CHEBI:17843"/>
    </ligand>
</feature>
<feature type="binding site" evidence="1">
    <location>
        <position position="69"/>
    </location>
    <ligand>
        <name>tRNA</name>
        <dbReference type="ChEBI" id="CHEBI:17843"/>
    </ligand>
</feature>
<feature type="binding site" evidence="1">
    <location>
        <position position="71"/>
    </location>
    <ligand>
        <name>tRNA</name>
        <dbReference type="ChEBI" id="CHEBI:17843"/>
    </ligand>
</feature>
<feature type="binding site" evidence="1">
    <location>
        <position position="117"/>
    </location>
    <ligand>
        <name>tRNA</name>
        <dbReference type="ChEBI" id="CHEBI:17843"/>
    </ligand>
</feature>
<feature type="site" description="Discriminates between blocked and unblocked aminoacyl-tRNA" evidence="1">
    <location>
        <position position="13"/>
    </location>
</feature>
<feature type="site" description="Stabilizes the basic form of H active site to accept a proton" evidence="1">
    <location>
        <position position="96"/>
    </location>
</feature>
<reference key="1">
    <citation type="journal article" date="2008" name="PLoS ONE">
        <title>A recalibrated molecular clock and independent origins for the cholera pandemic clones.</title>
        <authorList>
            <person name="Feng L."/>
            <person name="Reeves P.R."/>
            <person name="Lan R."/>
            <person name="Ren Y."/>
            <person name="Gao C."/>
            <person name="Zhou Z."/>
            <person name="Ren Y."/>
            <person name="Cheng J."/>
            <person name="Wang W."/>
            <person name="Wang J."/>
            <person name="Qian W."/>
            <person name="Li D."/>
            <person name="Wang L."/>
        </authorList>
    </citation>
    <scope>NUCLEOTIDE SEQUENCE [LARGE SCALE GENOMIC DNA]</scope>
    <source>
        <strain>M66-2</strain>
    </source>
</reference>
<proteinExistence type="inferred from homology"/>
<comment type="function">
    <text evidence="1">Hydrolyzes ribosome-free peptidyl-tRNAs (with 1 or more amino acids incorporated), which drop off the ribosome during protein synthesis, or as a result of ribosome stalling.</text>
</comment>
<comment type="function">
    <text evidence="1">Catalyzes the release of premature peptidyl moieties from peptidyl-tRNA molecules trapped in stalled 50S ribosomal subunits, and thus maintains levels of free tRNAs and 50S ribosomes.</text>
</comment>
<comment type="catalytic activity">
    <reaction evidence="1">
        <text>an N-acyl-L-alpha-aminoacyl-tRNA + H2O = an N-acyl-L-amino acid + a tRNA + H(+)</text>
        <dbReference type="Rhea" id="RHEA:54448"/>
        <dbReference type="Rhea" id="RHEA-COMP:10123"/>
        <dbReference type="Rhea" id="RHEA-COMP:13883"/>
        <dbReference type="ChEBI" id="CHEBI:15377"/>
        <dbReference type="ChEBI" id="CHEBI:15378"/>
        <dbReference type="ChEBI" id="CHEBI:59874"/>
        <dbReference type="ChEBI" id="CHEBI:78442"/>
        <dbReference type="ChEBI" id="CHEBI:138191"/>
        <dbReference type="EC" id="3.1.1.29"/>
    </reaction>
</comment>
<comment type="subunit">
    <text evidence="1">Monomer.</text>
</comment>
<comment type="subcellular location">
    <subcellularLocation>
        <location evidence="1">Cytoplasm</location>
    </subcellularLocation>
</comment>
<comment type="similarity">
    <text evidence="1">Belongs to the PTH family.</text>
</comment>
<dbReference type="EC" id="3.1.1.29" evidence="1"/>
<dbReference type="EMBL" id="CP001233">
    <property type="protein sequence ID" value="ACP06409.1"/>
    <property type="molecule type" value="Genomic_DNA"/>
</dbReference>
<dbReference type="RefSeq" id="WP_000081944.1">
    <property type="nucleotide sequence ID" value="NC_012578.1"/>
</dbReference>
<dbReference type="BMRB" id="C3LPI9"/>
<dbReference type="SMR" id="C3LPI9"/>
<dbReference type="KEGG" id="vcm:VCM66_2107"/>
<dbReference type="HOGENOM" id="CLU_062456_3_1_6"/>
<dbReference type="EvolutionaryTrace" id="C3LPI9"/>
<dbReference type="Proteomes" id="UP000001217">
    <property type="component" value="Chromosome I"/>
</dbReference>
<dbReference type="GO" id="GO:0005737">
    <property type="term" value="C:cytoplasm"/>
    <property type="evidence" value="ECO:0007669"/>
    <property type="project" value="UniProtKB-SubCell"/>
</dbReference>
<dbReference type="GO" id="GO:0004045">
    <property type="term" value="F:peptidyl-tRNA hydrolase activity"/>
    <property type="evidence" value="ECO:0007669"/>
    <property type="project" value="UniProtKB-UniRule"/>
</dbReference>
<dbReference type="GO" id="GO:0000049">
    <property type="term" value="F:tRNA binding"/>
    <property type="evidence" value="ECO:0007669"/>
    <property type="project" value="UniProtKB-UniRule"/>
</dbReference>
<dbReference type="GO" id="GO:0006515">
    <property type="term" value="P:protein quality control for misfolded or incompletely synthesized proteins"/>
    <property type="evidence" value="ECO:0007669"/>
    <property type="project" value="UniProtKB-UniRule"/>
</dbReference>
<dbReference type="GO" id="GO:0072344">
    <property type="term" value="P:rescue of stalled ribosome"/>
    <property type="evidence" value="ECO:0007669"/>
    <property type="project" value="UniProtKB-UniRule"/>
</dbReference>
<dbReference type="CDD" id="cd00462">
    <property type="entry name" value="PTH"/>
    <property type="match status" value="1"/>
</dbReference>
<dbReference type="FunFam" id="3.40.50.1470:FF:000001">
    <property type="entry name" value="Peptidyl-tRNA hydrolase"/>
    <property type="match status" value="1"/>
</dbReference>
<dbReference type="Gene3D" id="3.40.50.1470">
    <property type="entry name" value="Peptidyl-tRNA hydrolase"/>
    <property type="match status" value="1"/>
</dbReference>
<dbReference type="HAMAP" id="MF_00083">
    <property type="entry name" value="Pept_tRNA_hydro_bact"/>
    <property type="match status" value="1"/>
</dbReference>
<dbReference type="InterPro" id="IPR001328">
    <property type="entry name" value="Pept_tRNA_hydro"/>
</dbReference>
<dbReference type="InterPro" id="IPR018171">
    <property type="entry name" value="Pept_tRNA_hydro_CS"/>
</dbReference>
<dbReference type="InterPro" id="IPR036416">
    <property type="entry name" value="Pept_tRNA_hydro_sf"/>
</dbReference>
<dbReference type="NCBIfam" id="TIGR00447">
    <property type="entry name" value="pth"/>
    <property type="match status" value="1"/>
</dbReference>
<dbReference type="PANTHER" id="PTHR17224">
    <property type="entry name" value="PEPTIDYL-TRNA HYDROLASE"/>
    <property type="match status" value="1"/>
</dbReference>
<dbReference type="PANTHER" id="PTHR17224:SF1">
    <property type="entry name" value="PEPTIDYL-TRNA HYDROLASE"/>
    <property type="match status" value="1"/>
</dbReference>
<dbReference type="Pfam" id="PF01195">
    <property type="entry name" value="Pept_tRNA_hydro"/>
    <property type="match status" value="1"/>
</dbReference>
<dbReference type="SUPFAM" id="SSF53178">
    <property type="entry name" value="Peptidyl-tRNA hydrolase-like"/>
    <property type="match status" value="1"/>
</dbReference>
<dbReference type="PROSITE" id="PS01195">
    <property type="entry name" value="PEPT_TRNA_HYDROL_1"/>
    <property type="match status" value="1"/>
</dbReference>
<dbReference type="PROSITE" id="PS01196">
    <property type="entry name" value="PEPT_TRNA_HYDROL_2"/>
    <property type="match status" value="1"/>
</dbReference>
<keyword id="KW-0963">Cytoplasm</keyword>
<keyword id="KW-0378">Hydrolase</keyword>
<keyword id="KW-0694">RNA-binding</keyword>
<keyword id="KW-0820">tRNA-binding</keyword>
<sequence length="196" mass="21483">MSQPIKLLVGLANPGPEYAKTRHNAGAWVVEELARIHNVTLKNEPKFFGLTGRLLINSQELRVLIPTTFMNLSGKAIAALANFYQIKPEEIMVAHDELDLPPGVAKFKQGGGHGGHNGLKDTISKLGNNKEFYRLRLGIGHPGHKDKVAGYVLGKAPAKEQECLDAAVDESVRCLEILMKDGLTKAQNRLHTFKAE</sequence>
<organism>
    <name type="scientific">Vibrio cholerae serotype O1 (strain M66-2)</name>
    <dbReference type="NCBI Taxonomy" id="579112"/>
    <lineage>
        <taxon>Bacteria</taxon>
        <taxon>Pseudomonadati</taxon>
        <taxon>Pseudomonadota</taxon>
        <taxon>Gammaproteobacteria</taxon>
        <taxon>Vibrionales</taxon>
        <taxon>Vibrionaceae</taxon>
        <taxon>Vibrio</taxon>
    </lineage>
</organism>
<gene>
    <name evidence="1" type="primary">pth</name>
    <name type="ordered locus">VCM66_2107</name>
</gene>
<accession>C3LPI9</accession>
<protein>
    <recommendedName>
        <fullName evidence="1">Peptidyl-tRNA hydrolase</fullName>
        <shortName evidence="1">Pth</shortName>
        <ecNumber evidence="1">3.1.1.29</ecNumber>
    </recommendedName>
</protein>